<evidence type="ECO:0000255" key="1">
    <source>
        <dbReference type="HAMAP-Rule" id="MF_01333"/>
    </source>
</evidence>
<evidence type="ECO:0000305" key="2"/>
<reference key="1">
    <citation type="journal article" date="2003" name="Proc. Natl. Acad. Sci. U.S.A.">
        <title>The complete genome sequence of Mycobacterium bovis.</title>
        <authorList>
            <person name="Garnier T."/>
            <person name="Eiglmeier K."/>
            <person name="Camus J.-C."/>
            <person name="Medina N."/>
            <person name="Mansoor H."/>
            <person name="Pryor M."/>
            <person name="Duthoy S."/>
            <person name="Grondin S."/>
            <person name="Lacroix C."/>
            <person name="Monsempe C."/>
            <person name="Simon S."/>
            <person name="Harris B."/>
            <person name="Atkin R."/>
            <person name="Doggett J."/>
            <person name="Mayes R."/>
            <person name="Keating L."/>
            <person name="Wheeler P.R."/>
            <person name="Parkhill J."/>
            <person name="Barrell B.G."/>
            <person name="Cole S.T."/>
            <person name="Gordon S.V."/>
            <person name="Hewinson R.G."/>
        </authorList>
    </citation>
    <scope>NUCLEOTIDE SEQUENCE [LARGE SCALE GENOMIC DNA]</scope>
    <source>
        <strain>ATCC BAA-935 / AF2122/97</strain>
    </source>
</reference>
<reference key="2">
    <citation type="journal article" date="2017" name="Genome Announc.">
        <title>Updated reference genome sequence and annotation of Mycobacterium bovis AF2122/97.</title>
        <authorList>
            <person name="Malone K.M."/>
            <person name="Farrell D."/>
            <person name="Stuber T.P."/>
            <person name="Schubert O.T."/>
            <person name="Aebersold R."/>
            <person name="Robbe-Austerman S."/>
            <person name="Gordon S.V."/>
        </authorList>
    </citation>
    <scope>NUCLEOTIDE SEQUENCE [LARGE SCALE GENOMIC DNA]</scope>
    <scope>GENOME REANNOTATION</scope>
    <source>
        <strain>ATCC BAA-935 / AF2122/97</strain>
    </source>
</reference>
<organism>
    <name type="scientific">Mycobacterium bovis (strain ATCC BAA-935 / AF2122/97)</name>
    <dbReference type="NCBI Taxonomy" id="233413"/>
    <lineage>
        <taxon>Bacteria</taxon>
        <taxon>Bacillati</taxon>
        <taxon>Actinomycetota</taxon>
        <taxon>Actinomycetes</taxon>
        <taxon>Mycobacteriales</taxon>
        <taxon>Mycobacteriaceae</taxon>
        <taxon>Mycobacterium</taxon>
        <taxon>Mycobacterium tuberculosis complex</taxon>
    </lineage>
</organism>
<keyword id="KW-1185">Reference proteome</keyword>
<keyword id="KW-0687">Ribonucleoprotein</keyword>
<keyword id="KW-0689">Ribosomal protein</keyword>
<keyword id="KW-0694">RNA-binding</keyword>
<keyword id="KW-0699">rRNA-binding</keyword>
<keyword id="KW-0820">tRNA-binding</keyword>
<feature type="chain" id="PRO_0000124946" description="Large ribosomal subunit protein uL5">
    <location>
        <begin position="1"/>
        <end position="187"/>
    </location>
</feature>
<accession>P62402</accession>
<accession>A0A1R3XW67</accession>
<accession>P95064</accession>
<accession>X2BFT0</accession>
<gene>
    <name evidence="1" type="primary">rplE</name>
    <name type="ordered locus">BQ2027_MB0737</name>
</gene>
<name>RL5_MYCBO</name>
<sequence length="187" mass="21019">MTTAQKVQPRLKERYRSEIRDALRKQFGYGNVMQIPTVTKVVVNMGVGEAARDAKLINGAVNDLALITGQKPEVRRARKSIAQFKLREGMPVGVRVTLRGDRMWEFLDRLTSIALPRIRDFRGLSPKQFDGVGNYTFGLAEQAVFHEVDVDKIDRVRGMDINVVTSAATDDEGRALLRALGFPFKEN</sequence>
<proteinExistence type="inferred from homology"/>
<protein>
    <recommendedName>
        <fullName evidence="1">Large ribosomal subunit protein uL5</fullName>
    </recommendedName>
    <alternativeName>
        <fullName evidence="2">50S ribosomal protein L5</fullName>
    </alternativeName>
</protein>
<dbReference type="EMBL" id="LT708304">
    <property type="protein sequence ID" value="SIT99336.1"/>
    <property type="molecule type" value="Genomic_DNA"/>
</dbReference>
<dbReference type="RefSeq" id="NP_854395.1">
    <property type="nucleotide sequence ID" value="NC_002945.3"/>
</dbReference>
<dbReference type="RefSeq" id="WP_003403660.1">
    <property type="nucleotide sequence ID" value="NC_002945.4"/>
</dbReference>
<dbReference type="SMR" id="P62402"/>
<dbReference type="GeneID" id="45424681"/>
<dbReference type="KEGG" id="mbo:BQ2027_MB0737"/>
<dbReference type="PATRIC" id="fig|233413.5.peg.804"/>
<dbReference type="Proteomes" id="UP000001419">
    <property type="component" value="Chromosome"/>
</dbReference>
<dbReference type="GO" id="GO:1990904">
    <property type="term" value="C:ribonucleoprotein complex"/>
    <property type="evidence" value="ECO:0007669"/>
    <property type="project" value="UniProtKB-KW"/>
</dbReference>
<dbReference type="GO" id="GO:0005840">
    <property type="term" value="C:ribosome"/>
    <property type="evidence" value="ECO:0007669"/>
    <property type="project" value="UniProtKB-KW"/>
</dbReference>
<dbReference type="GO" id="GO:0019843">
    <property type="term" value="F:rRNA binding"/>
    <property type="evidence" value="ECO:0007669"/>
    <property type="project" value="UniProtKB-UniRule"/>
</dbReference>
<dbReference type="GO" id="GO:0003735">
    <property type="term" value="F:structural constituent of ribosome"/>
    <property type="evidence" value="ECO:0007669"/>
    <property type="project" value="InterPro"/>
</dbReference>
<dbReference type="GO" id="GO:0000049">
    <property type="term" value="F:tRNA binding"/>
    <property type="evidence" value="ECO:0007669"/>
    <property type="project" value="UniProtKB-UniRule"/>
</dbReference>
<dbReference type="GO" id="GO:0006412">
    <property type="term" value="P:translation"/>
    <property type="evidence" value="ECO:0007669"/>
    <property type="project" value="UniProtKB-UniRule"/>
</dbReference>
<dbReference type="FunFam" id="3.30.1440.10:FF:000001">
    <property type="entry name" value="50S ribosomal protein L5"/>
    <property type="match status" value="1"/>
</dbReference>
<dbReference type="Gene3D" id="3.30.1440.10">
    <property type="match status" value="1"/>
</dbReference>
<dbReference type="HAMAP" id="MF_01333_B">
    <property type="entry name" value="Ribosomal_uL5_B"/>
    <property type="match status" value="1"/>
</dbReference>
<dbReference type="InterPro" id="IPR002132">
    <property type="entry name" value="Ribosomal_uL5"/>
</dbReference>
<dbReference type="InterPro" id="IPR020930">
    <property type="entry name" value="Ribosomal_uL5_bac-type"/>
</dbReference>
<dbReference type="InterPro" id="IPR031309">
    <property type="entry name" value="Ribosomal_uL5_C"/>
</dbReference>
<dbReference type="InterPro" id="IPR022803">
    <property type="entry name" value="Ribosomal_uL5_dom_sf"/>
</dbReference>
<dbReference type="InterPro" id="IPR031310">
    <property type="entry name" value="Ribosomal_uL5_N"/>
</dbReference>
<dbReference type="NCBIfam" id="NF000585">
    <property type="entry name" value="PRK00010.1"/>
    <property type="match status" value="1"/>
</dbReference>
<dbReference type="PANTHER" id="PTHR11994">
    <property type="entry name" value="60S RIBOSOMAL PROTEIN L11-RELATED"/>
    <property type="match status" value="1"/>
</dbReference>
<dbReference type="Pfam" id="PF00281">
    <property type="entry name" value="Ribosomal_L5"/>
    <property type="match status" value="1"/>
</dbReference>
<dbReference type="Pfam" id="PF00673">
    <property type="entry name" value="Ribosomal_L5_C"/>
    <property type="match status" value="1"/>
</dbReference>
<dbReference type="PIRSF" id="PIRSF002161">
    <property type="entry name" value="Ribosomal_L5"/>
    <property type="match status" value="1"/>
</dbReference>
<dbReference type="SUPFAM" id="SSF55282">
    <property type="entry name" value="RL5-like"/>
    <property type="match status" value="1"/>
</dbReference>
<comment type="function">
    <text evidence="1">This is one of the proteins that bind and probably mediate the attachment of the 5S RNA into the large ribosomal subunit, where it forms part of the central protuberance. In the 70S ribosome it contacts protein S13 of the 30S subunit (bridge B1b), connecting the 2 subunits; this bridge is implicated in subunit movement. Contacts the P site tRNA; the 5S rRNA and some of its associated proteins might help stabilize positioning of ribosome-bound tRNAs.</text>
</comment>
<comment type="subunit">
    <text evidence="1">Part of the 50S ribosomal subunit; part of the 5S rRNA/L5/L18/L25 subcomplex. Contacts the 5S rRNA and the P site tRNA. Forms a bridge to the 30S subunit in the 70S ribosome.</text>
</comment>
<comment type="similarity">
    <text evidence="1">Belongs to the universal ribosomal protein uL5 family.</text>
</comment>